<dbReference type="EMBL" id="U07651">
    <property type="protein sequence ID" value="AAA19855.1"/>
    <property type="molecule type" value="Unassigned_RNA"/>
</dbReference>
<dbReference type="EMBL" id="U00096">
    <property type="protein sequence ID" value="AAC73781.1"/>
    <property type="molecule type" value="Genomic_DNA"/>
</dbReference>
<dbReference type="EMBL" id="AP009048">
    <property type="protein sequence ID" value="BAA35336.1"/>
    <property type="molecule type" value="Genomic_DNA"/>
</dbReference>
<dbReference type="PIR" id="A54296">
    <property type="entry name" value="A54296"/>
</dbReference>
<dbReference type="RefSeq" id="NP_415213.1">
    <property type="nucleotide sequence ID" value="NC_000913.3"/>
</dbReference>
<dbReference type="RefSeq" id="WP_000848387.1">
    <property type="nucleotide sequence ID" value="NZ_STEB01000044.1"/>
</dbReference>
<dbReference type="PDB" id="1IU3">
    <property type="method" value="X-ray"/>
    <property type="resolution" value="3.00 A"/>
    <property type="chains" value="C/F=71-181"/>
</dbReference>
<dbReference type="PDB" id="1J3E">
    <property type="method" value="X-ray"/>
    <property type="resolution" value="2.50 A"/>
    <property type="chains" value="A=71-181"/>
</dbReference>
<dbReference type="PDB" id="1LRR">
    <property type="method" value="X-ray"/>
    <property type="resolution" value="2.65 A"/>
    <property type="chains" value="A/D=51-181"/>
</dbReference>
<dbReference type="PDB" id="1XRX">
    <property type="method" value="X-ray"/>
    <property type="resolution" value="2.15 A"/>
    <property type="chains" value="A/B/C/D=1-50"/>
</dbReference>
<dbReference type="PDB" id="3FMT">
    <property type="method" value="X-ray"/>
    <property type="resolution" value="2.98 A"/>
    <property type="chains" value="A/B/E/F=1-181"/>
</dbReference>
<dbReference type="PDBsum" id="1IU3"/>
<dbReference type="PDBsum" id="1J3E"/>
<dbReference type="PDBsum" id="1LRR"/>
<dbReference type="PDBsum" id="1XRX"/>
<dbReference type="PDBsum" id="3FMT"/>
<dbReference type="SMR" id="P0AFY8"/>
<dbReference type="BioGRID" id="4261907">
    <property type="interactions" value="84"/>
</dbReference>
<dbReference type="BioGRID" id="849651">
    <property type="interactions" value="2"/>
</dbReference>
<dbReference type="ComplexPortal" id="CPX-1955">
    <property type="entry name" value="SeqA-DNA complex"/>
</dbReference>
<dbReference type="DIP" id="DIP-48017N"/>
<dbReference type="FunCoup" id="P0AFY8">
    <property type="interactions" value="96"/>
</dbReference>
<dbReference type="IntAct" id="P0AFY8">
    <property type="interactions" value="3"/>
</dbReference>
<dbReference type="STRING" id="511145.b0687"/>
<dbReference type="jPOST" id="P0AFY8"/>
<dbReference type="PaxDb" id="511145-b0687"/>
<dbReference type="EnsemblBacteria" id="AAC73781">
    <property type="protein sequence ID" value="AAC73781"/>
    <property type="gene ID" value="b0687"/>
</dbReference>
<dbReference type="GeneID" id="93776797"/>
<dbReference type="GeneID" id="945272"/>
<dbReference type="KEGG" id="ecj:JW0674"/>
<dbReference type="KEGG" id="eco:b0687"/>
<dbReference type="KEGG" id="ecoc:C3026_03425"/>
<dbReference type="PATRIC" id="fig|1411691.4.peg.1589"/>
<dbReference type="EchoBASE" id="EB2114"/>
<dbReference type="eggNOG" id="COG3057">
    <property type="taxonomic scope" value="Bacteria"/>
</dbReference>
<dbReference type="HOGENOM" id="CLU_099733_0_0_6"/>
<dbReference type="InParanoid" id="P0AFY8"/>
<dbReference type="OMA" id="RTRTYFA"/>
<dbReference type="OrthoDB" id="5591069at2"/>
<dbReference type="PhylomeDB" id="P0AFY8"/>
<dbReference type="BioCyc" id="EcoCyc:EG12197-MONOMER"/>
<dbReference type="EvolutionaryTrace" id="P0AFY8"/>
<dbReference type="PRO" id="PR:P0AFY8"/>
<dbReference type="Proteomes" id="UP000000625">
    <property type="component" value="Chromosome"/>
</dbReference>
<dbReference type="GO" id="GO:0005829">
    <property type="term" value="C:cytosol"/>
    <property type="evidence" value="ECO:0000314"/>
    <property type="project" value="EcoCyc"/>
</dbReference>
<dbReference type="GO" id="GO:0032991">
    <property type="term" value="C:protein-containing complex"/>
    <property type="evidence" value="ECO:0000314"/>
    <property type="project" value="EcoCyc"/>
</dbReference>
<dbReference type="GO" id="GO:1990097">
    <property type="term" value="C:SeqA-DNA complex"/>
    <property type="evidence" value="ECO:0000314"/>
    <property type="project" value="EcoCyc"/>
</dbReference>
<dbReference type="GO" id="GO:0003688">
    <property type="term" value="F:DNA replication origin binding"/>
    <property type="evidence" value="ECO:0000314"/>
    <property type="project" value="EcoCyc"/>
</dbReference>
<dbReference type="GO" id="GO:0010385">
    <property type="term" value="F:double-stranded methylated DNA binding"/>
    <property type="evidence" value="ECO:0000314"/>
    <property type="project" value="EcoCyc"/>
</dbReference>
<dbReference type="GO" id="GO:0044729">
    <property type="term" value="F:hemi-methylated DNA-binding"/>
    <property type="evidence" value="ECO:0000314"/>
    <property type="project" value="EcoCyc"/>
</dbReference>
<dbReference type="GO" id="GO:0042802">
    <property type="term" value="F:identical protein binding"/>
    <property type="evidence" value="ECO:0000353"/>
    <property type="project" value="IntAct"/>
</dbReference>
<dbReference type="GO" id="GO:0042803">
    <property type="term" value="F:protein homodimerization activity"/>
    <property type="evidence" value="ECO:0000314"/>
    <property type="project" value="EcoCyc"/>
</dbReference>
<dbReference type="GO" id="GO:0032297">
    <property type="term" value="P:negative regulation of DNA-templated DNA replication initiation"/>
    <property type="evidence" value="ECO:0000315"/>
    <property type="project" value="EcoCyc"/>
</dbReference>
<dbReference type="GO" id="GO:0090143">
    <property type="term" value="P:nucleoid organization"/>
    <property type="evidence" value="ECO:0000316"/>
    <property type="project" value="EcoCyc"/>
</dbReference>
<dbReference type="GO" id="GO:0006355">
    <property type="term" value="P:regulation of DNA-templated transcription"/>
    <property type="evidence" value="ECO:0007669"/>
    <property type="project" value="InterPro"/>
</dbReference>
<dbReference type="GO" id="GO:0009314">
    <property type="term" value="P:response to radiation"/>
    <property type="evidence" value="ECO:0000315"/>
    <property type="project" value="EcoCyc"/>
</dbReference>
<dbReference type="GO" id="GO:0007062">
    <property type="term" value="P:sister chromatid cohesion"/>
    <property type="evidence" value="ECO:0000316"/>
    <property type="project" value="EcoCyc"/>
</dbReference>
<dbReference type="FunFam" id="1.10.1220.10:FF:000002">
    <property type="entry name" value="Negative modulator of initiation of replication"/>
    <property type="match status" value="1"/>
</dbReference>
<dbReference type="FunFam" id="1.20.1380.10:FF:000001">
    <property type="entry name" value="Negative modulator of initiation of replication"/>
    <property type="match status" value="1"/>
</dbReference>
<dbReference type="Gene3D" id="1.10.1220.10">
    <property type="entry name" value="Met repressor-like"/>
    <property type="match status" value="1"/>
</dbReference>
<dbReference type="Gene3D" id="1.20.1380.10">
    <property type="entry name" value="Replication modulator SeqA, C-terminal DNA-binding domain"/>
    <property type="match status" value="1"/>
</dbReference>
<dbReference type="HAMAP" id="MF_00908">
    <property type="entry name" value="SeqA"/>
    <property type="match status" value="1"/>
</dbReference>
<dbReference type="InterPro" id="IPR013321">
    <property type="entry name" value="Arc_rbn_hlx_hlx"/>
</dbReference>
<dbReference type="InterPro" id="IPR010985">
    <property type="entry name" value="Ribbon_hlx_hlx"/>
</dbReference>
<dbReference type="InterPro" id="IPR005621">
    <property type="entry name" value="SeqA"/>
</dbReference>
<dbReference type="InterPro" id="IPR026577">
    <property type="entry name" value="SeqA_DNA-bd_C"/>
</dbReference>
<dbReference type="InterPro" id="IPR036835">
    <property type="entry name" value="SeqA_DNA-bd_C_sf"/>
</dbReference>
<dbReference type="InterPro" id="IPR033761">
    <property type="entry name" value="SeqA_N"/>
</dbReference>
<dbReference type="NCBIfam" id="NF008389">
    <property type="entry name" value="PRK11187.1"/>
    <property type="match status" value="1"/>
</dbReference>
<dbReference type="Pfam" id="PF03925">
    <property type="entry name" value="SeqA"/>
    <property type="match status" value="1"/>
</dbReference>
<dbReference type="Pfam" id="PF17206">
    <property type="entry name" value="SeqA_N"/>
    <property type="match status" value="1"/>
</dbReference>
<dbReference type="PIRSF" id="PIRSF019401">
    <property type="entry name" value="SeqA"/>
    <property type="match status" value="1"/>
</dbReference>
<dbReference type="SUPFAM" id="SSF82808">
    <property type="entry name" value="Replication modulator SeqA, C-terminal DNA-binding domain"/>
    <property type="match status" value="1"/>
</dbReference>
<dbReference type="SUPFAM" id="SSF47598">
    <property type="entry name" value="Ribbon-helix-helix"/>
    <property type="match status" value="1"/>
</dbReference>
<comment type="function">
    <text evidence="1 2 3 9 10 11 12">Negative regulator of replication initiation, which contributes to regulation of DNA replication and ensures that replication initiation occurs exactly once per chromosome per cell cycle. Binds to pairs of hemimethylated GATC sequences in the oriC region, thus preventing assembly of replication proteins and re-initiation at newly replicated origins. Repression is relieved when the region becomes fully methylated. Can also bind to hemimethylated GATC sequences outside of oriC region. Binds, with less affinity, to fully methylated GATC sites and affects timing of replication. May play a role in chromosome organization and gene regulation.</text>
</comment>
<comment type="subunit">
    <text evidence="1 4 6 7 8">Homodimer. Polymerizes to form helical filaments. Dimerization is sufficient for DNA-binding, but oligomerization is essential for function.</text>
</comment>
<comment type="interaction">
    <interactant intactId="EBI-552553">
        <id>P0AFY8</id>
    </interactant>
    <interactant intactId="EBI-552553">
        <id>P0AFY8</id>
        <label>seqA</label>
    </interactant>
    <organismsDiffer>false</organismsDiffer>
    <experiments>13</experiments>
</comment>
<comment type="interaction">
    <interactant intactId="EBI-552553">
        <id>P0AFY8</id>
    </interactant>
    <interactant intactId="EBI-552176">
        <id>P0A8F8</id>
        <label>uvrB</label>
    </interactant>
    <organismsDiffer>false</organismsDiffer>
    <experiments>2</experiments>
</comment>
<comment type="subcellular location">
    <subcellularLocation>
        <location evidence="1 13">Cytoplasm</location>
    </subcellularLocation>
    <text>Localization is cell cycle-dependent. Localizes at midcell in newborn cells, then migrates in opposite directions toward cell quarter sites and remains tethered there until the cell divides.</text>
</comment>
<comment type="domain">
    <text evidence="4 5 8">The N-terminal domain is required for multimerization. The C-terminal domain is involved in DNA-binding.</text>
</comment>
<comment type="similarity">
    <text evidence="1">Belongs to the SeqA family.</text>
</comment>
<proteinExistence type="evidence at protein level"/>
<sequence length="181" mass="20315">MKTIEVDDELYSYIASHTKHIGESASDILRRMLKFSAASQPAAPVTKEVRVASPAIVEAKPVKTIKDKVRAMRELLLSDEYAEQKRAVNRFMLLLSTLYSLDAQAFAEATESLHGRTRVYFAADEQTLLKNGNQTKPKHVPGTPYWVITNTNTGRKCSMIEHIMQSMQFPAELIEKVCGTI</sequence>
<keyword id="KW-0002">3D-structure</keyword>
<keyword id="KW-0963">Cytoplasm</keyword>
<keyword id="KW-0236">DNA replication inhibitor</keyword>
<keyword id="KW-0238">DNA-binding</keyword>
<keyword id="KW-1185">Reference proteome</keyword>
<reference key="1">
    <citation type="journal article" date="1994" name="Cell">
        <title>SeqA: a negative modulator of replication initiation in E. coli.</title>
        <authorList>
            <person name="Lu M."/>
            <person name="Campbell J.L."/>
            <person name="Boye E."/>
            <person name="Kleckner N."/>
        </authorList>
    </citation>
    <scope>NUCLEOTIDE SEQUENCE [GENOMIC DNA]</scope>
    <scope>FUNCTION</scope>
    <source>
        <strain>K12</strain>
    </source>
</reference>
<reference key="2">
    <citation type="journal article" date="1996" name="DNA Res.">
        <title>A 718-kb DNA sequence of the Escherichia coli K-12 genome corresponding to the 12.7-28.0 min region on the linkage map.</title>
        <authorList>
            <person name="Oshima T."/>
            <person name="Aiba H."/>
            <person name="Baba T."/>
            <person name="Fujita K."/>
            <person name="Hayashi K."/>
            <person name="Honjo A."/>
            <person name="Ikemoto K."/>
            <person name="Inada T."/>
            <person name="Itoh T."/>
            <person name="Kajihara M."/>
            <person name="Kanai K."/>
            <person name="Kashimoto K."/>
            <person name="Kimura S."/>
            <person name="Kitagawa M."/>
            <person name="Makino K."/>
            <person name="Masuda S."/>
            <person name="Miki T."/>
            <person name="Mizobuchi K."/>
            <person name="Mori H."/>
            <person name="Motomura K."/>
            <person name="Nakamura Y."/>
            <person name="Nashimoto H."/>
            <person name="Nishio Y."/>
            <person name="Saito N."/>
            <person name="Sampei G."/>
            <person name="Seki Y."/>
            <person name="Tagami H."/>
            <person name="Takemoto K."/>
            <person name="Wada C."/>
            <person name="Yamamoto Y."/>
            <person name="Yano M."/>
            <person name="Horiuchi T."/>
        </authorList>
    </citation>
    <scope>NUCLEOTIDE SEQUENCE [LARGE SCALE GENOMIC DNA]</scope>
    <source>
        <strain>K12</strain>
    </source>
</reference>
<reference key="3">
    <citation type="journal article" date="1997" name="Science">
        <title>The complete genome sequence of Escherichia coli K-12.</title>
        <authorList>
            <person name="Blattner F.R."/>
            <person name="Plunkett G. III"/>
            <person name="Bloch C.A."/>
            <person name="Perna N.T."/>
            <person name="Burland V."/>
            <person name="Riley M."/>
            <person name="Collado-Vides J."/>
            <person name="Glasner J.D."/>
            <person name="Rode C.K."/>
            <person name="Mayhew G.F."/>
            <person name="Gregor J."/>
            <person name="Davis N.W."/>
            <person name="Kirkpatrick H.A."/>
            <person name="Goeden M.A."/>
            <person name="Rose D.J."/>
            <person name="Mau B."/>
            <person name="Shao Y."/>
        </authorList>
    </citation>
    <scope>NUCLEOTIDE SEQUENCE [LARGE SCALE GENOMIC DNA]</scope>
    <source>
        <strain>K12 / MG1655 / ATCC 47076</strain>
    </source>
</reference>
<reference key="4">
    <citation type="journal article" date="2006" name="Mol. Syst. Biol.">
        <title>Highly accurate genome sequences of Escherichia coli K-12 strains MG1655 and W3110.</title>
        <authorList>
            <person name="Hayashi K."/>
            <person name="Morooka N."/>
            <person name="Yamamoto Y."/>
            <person name="Fujita K."/>
            <person name="Isono K."/>
            <person name="Choi S."/>
            <person name="Ohtsubo E."/>
            <person name="Baba T."/>
            <person name="Wanner B.L."/>
            <person name="Mori H."/>
            <person name="Horiuchi T."/>
        </authorList>
    </citation>
    <scope>NUCLEOTIDE SEQUENCE [LARGE SCALE GENOMIC DNA]</scope>
    <source>
        <strain>K12 / W3110 / ATCC 27325 / DSM 5911</strain>
    </source>
</reference>
<reference key="5">
    <citation type="journal article" date="1994" name="Mol. Microbiol.">
        <title>SeqA limits DnaA activity in replication from oriC in Escherichia coli.</title>
        <authorList>
            <person name="von Freiesleben U."/>
            <person name="Rasmussen K.V."/>
            <person name="Schaechter M."/>
        </authorList>
    </citation>
    <scope>FUNCTION</scope>
</reference>
<reference key="6">
    <citation type="journal article" date="1994" name="Curr. Biol.">
        <title>Replication initiation. A new controller in Escherichia coli.</title>
        <authorList>
            <person name="Baker T.A."/>
        </authorList>
    </citation>
    <scope>REVIEW</scope>
</reference>
<reference key="7">
    <citation type="journal article" date="1995" name="Cell">
        <title>E. coli seqA protein binds oriC in two different methyl-modulated reactions appropriate to its roles in DNA replication initiation and origin sequestration.</title>
        <authorList>
            <person name="Slater S."/>
            <person name="Wold S."/>
            <person name="Lu M."/>
            <person name="Boye E."/>
            <person name="Skarstad K."/>
            <person name="Kleckner N."/>
        </authorList>
    </citation>
    <scope>CHARACTERIZATION</scope>
    <scope>FUNCTION</scope>
</reference>
<reference key="8">
    <citation type="journal article" date="1998" name="Mol. Cell">
        <title>Cell cycle-dependent duplication and bidirectional migration of SeqA-associated DNA-protein complexes in E. coli.</title>
        <authorList>
            <person name="Hiraga S."/>
            <person name="Ichinose C."/>
            <person name="Niki H."/>
            <person name="Yamazoe M."/>
        </authorList>
    </citation>
    <scope>SUBCELLULAR LOCATION</scope>
    <source>
        <strain>K12</strain>
    </source>
</reference>
<reference key="9">
    <citation type="journal article" date="1998" name="Proc. Natl. Acad. Sci. U.S.A.">
        <title>High-affinity binding of hemimethylated oriC by Escherichia coli membranes is mediated by a multiprotein system that includes seqA and a newly identified factor, seqB.</title>
        <authorList>
            <person name="Shakibai N."/>
            <person name="Ishidate K."/>
            <person name="Reshetnyak E."/>
            <person name="Gunji S."/>
            <person name="Kohiyama M."/>
            <person name="Rothfield L."/>
        </authorList>
    </citation>
    <scope>CHARACTERIZATION</scope>
</reference>
<reference key="10">
    <citation type="journal article" date="2000" name="EMBO J.">
        <title>A case for sliding SeqA tracts at anchored replication forks during Escherichia coli chromosome replication and segregation.</title>
        <authorList>
            <person name="Brendler T."/>
            <person name="Sawitzke J."/>
            <person name="Sergueev K."/>
            <person name="Austin S."/>
        </authorList>
    </citation>
    <scope>FUNCTION</scope>
    <scope>DNA-BINDING</scope>
</reference>
<reference key="11">
    <citation type="journal article" date="2000" name="Mol. Microbiol.">
        <title>The Escherichia coli SeqA protein binds specifically and co-operatively to two sites in hemimethylated and fully methylated oriC.</title>
        <authorList>
            <person name="Skarstad K."/>
            <person name="Lueder G."/>
            <person name="Lurz R."/>
            <person name="Speck C."/>
            <person name="Messer W."/>
        </authorList>
    </citation>
    <scope>FUNCTION</scope>
    <scope>DNA-BINDING</scope>
</reference>
<reference key="12">
    <citation type="journal article" date="2003" name="Biochem. Biophys. Res. Commun.">
        <title>Identification of functional domains of the Escherichia coli SeqA protein.</title>
        <authorList>
            <person name="Fujikawa N."/>
            <person name="Kurumizaka H."/>
            <person name="Yamazoe M."/>
            <person name="Hiraga S."/>
            <person name="Yokoyama S."/>
        </authorList>
    </citation>
    <scope>DOMAIN</scope>
</reference>
<reference key="13">
    <citation type="journal article" date="2009" name="Plasmid">
        <title>The Escherichia coli SeqA protein.</title>
        <authorList>
            <person name="Waldminghaus T."/>
            <person name="Skarstad K."/>
        </authorList>
    </citation>
    <scope>REVIEW</scope>
</reference>
<reference key="14">
    <citation type="journal article" date="2010" name="MBio">
        <title>Dynamic distribution of SeqA protein across the chromosome of Escherichia coli K-12.</title>
        <authorList>
            <person name="Sanchez-Romero M.A."/>
            <person name="Busby S.J."/>
            <person name="Dyer N.P."/>
            <person name="Ott S."/>
            <person name="Millard A.D."/>
            <person name="Grainger D.C."/>
        </authorList>
    </citation>
    <scope>FUNCTION</scope>
    <scope>DNA-BINDING</scope>
    <source>
        <strain>K12 / CMT940</strain>
    </source>
</reference>
<reference key="15">
    <citation type="journal article" date="2002" name="Nat. Struct. Biol.">
        <title>Insights into negative modulation of E. coli replication initiation from the structure of SeqA-hemimethylated DNA complex.</title>
        <authorList>
            <person name="Guarne A."/>
            <person name="Zhao Q."/>
            <person name="Ghirlando R."/>
            <person name="Yang W."/>
        </authorList>
    </citation>
    <scope>X-RAY CRYSTALLOGRAPHY (2.65 ANGSTROMS) OF 51-181 IN COMPLEX WITH HEMIMETHYLATED DNA</scope>
    <scope>DNA-BINDING</scope>
    <scope>SUBUNIT</scope>
    <scope>DOMAIN</scope>
</reference>
<reference key="16">
    <citation type="journal article" date="2004" name="Nucleic Acids Res.">
        <title>Structural and biochemical analyses of hemimethylated DNA binding by the SeqA protein.</title>
        <authorList>
            <person name="Fujikawa N."/>
            <person name="Kurumizaka H."/>
            <person name="Nureki O."/>
            <person name="Tanaka Y."/>
            <person name="Yamazoe M."/>
            <person name="Hiraga S."/>
            <person name="Yokoyama S."/>
        </authorList>
    </citation>
    <scope>X-RAY CRYSTALLOGRAPHY (3.0 ANGSTROMS) OF 71-181 IN COMPLEX WITH HEMIMETHYLATED DNA</scope>
    <scope>MUTAGENESIS OF ARG-116; ARG-118; THR-149; ASN-150; THR-151; ASN-152; ARG-155 AND LYS-156</scope>
    <scope>DNA-BINDING</scope>
</reference>
<reference key="17">
    <citation type="journal article" date="2005" name="EMBO J.">
        <title>Crystal structure of a SeqA-N filament: implications for DNA replication and chromosome organization.</title>
        <authorList>
            <person name="Guarne A."/>
            <person name="Brendler T."/>
            <person name="Zhao Q."/>
            <person name="Ghirlando R."/>
            <person name="Austin S."/>
            <person name="Yang W."/>
        </authorList>
    </citation>
    <scope>X-RAY CRYSTALLOGRAPHY (2.15 ANGSTROMS) OF 1-50</scope>
    <scope>SUBUNIT</scope>
</reference>
<reference key="18">
    <citation type="journal article" date="2009" name="Nucleic Acids Res.">
        <title>Structural insights into the cooperative binding of SeqA to a tandem GATC repeat.</title>
        <authorList>
            <person name="Chung Y.S."/>
            <person name="Brendler T."/>
            <person name="Austin S."/>
            <person name="Guarne A."/>
        </authorList>
    </citation>
    <scope>X-RAY CRYSTALLOGRAPHY (2.98 ANGSTROMS) IN COMPLEX WITH HEMIMETHYLATED DNA</scope>
    <scope>DNA-BINDING</scope>
    <scope>DOMAIN</scope>
</reference>
<reference key="19">
    <citation type="journal article" date="2009" name="Pathol. Biol.">
        <title>Modeling of the full-length Escherichia coli SeqA protein, in complex with DNA.</title>
        <authorList>
            <person name="Daghfous D."/>
            <person name="Chatti A."/>
            <person name="Hammami R."/>
            <person name="Landoulsi A."/>
        </authorList>
    </citation>
    <scope>3D-STRUCTURE MODELING</scope>
</reference>
<organism>
    <name type="scientific">Escherichia coli (strain K12)</name>
    <dbReference type="NCBI Taxonomy" id="83333"/>
    <lineage>
        <taxon>Bacteria</taxon>
        <taxon>Pseudomonadati</taxon>
        <taxon>Pseudomonadota</taxon>
        <taxon>Gammaproteobacteria</taxon>
        <taxon>Enterobacterales</taxon>
        <taxon>Enterobacteriaceae</taxon>
        <taxon>Escherichia</taxon>
    </lineage>
</organism>
<name>SEQA_ECOLI</name>
<feature type="chain" id="PRO_0000097684" description="Negative modulator of initiation of replication">
    <location>
        <begin position="1"/>
        <end position="181"/>
    </location>
</feature>
<feature type="region of interest" description="Interaction with DNA">
    <location>
        <begin position="87"/>
        <end position="88"/>
    </location>
</feature>
<feature type="region of interest" description="Interaction with DNA">
    <location>
        <begin position="116"/>
        <end position="120"/>
    </location>
</feature>
<feature type="region of interest" description="Interaction with DNA">
    <location>
        <begin position="150"/>
        <end position="156"/>
    </location>
</feature>
<feature type="mutagenesis site" description="Strongly reduced DNA binding." evidence="6">
    <original>R</original>
    <variation>A</variation>
    <location>
        <position position="116"/>
    </location>
</feature>
<feature type="mutagenesis site" description="Strongly reduced DNA binding." evidence="6">
    <original>R</original>
    <variation>A</variation>
    <location>
        <position position="118"/>
    </location>
</feature>
<feature type="mutagenesis site" description="Strongly reduced DNA binding." evidence="6">
    <original>T</original>
    <variation>A</variation>
    <location>
        <position position="149"/>
    </location>
</feature>
<feature type="mutagenesis site" description="Strongly reduced DNA binding." evidence="6">
    <original>N</original>
    <variation>A</variation>
    <variation>D</variation>
    <location>
        <position position="150"/>
    </location>
</feature>
<feature type="mutagenesis site" description="Reduced DNA binding." evidence="6">
    <original>T</original>
    <variation>A</variation>
    <location>
        <position position="151"/>
    </location>
</feature>
<feature type="mutagenesis site" description="Strongly reduced DNA binding." evidence="6">
    <original>N</original>
    <variation>D</variation>
    <location>
        <position position="152"/>
    </location>
</feature>
<feature type="mutagenesis site" description="Strongly reduced DNA binding." evidence="6">
    <original>R</original>
    <variation>A</variation>
    <location>
        <position position="155"/>
    </location>
</feature>
<feature type="mutagenesis site" description="Strongly reduced DNA binding." evidence="6">
    <original>K</original>
    <variation>A</variation>
    <location>
        <position position="156"/>
    </location>
</feature>
<feature type="strand" evidence="16">
    <location>
        <begin position="2"/>
        <end position="6"/>
    </location>
</feature>
<feature type="helix" evidence="16">
    <location>
        <begin position="8"/>
        <end position="15"/>
    </location>
</feature>
<feature type="helix" evidence="16">
    <location>
        <begin position="25"/>
        <end position="33"/>
    </location>
</feature>
<feature type="helix" evidence="17">
    <location>
        <begin position="36"/>
        <end position="38"/>
    </location>
</feature>
<feature type="helix" evidence="15">
    <location>
        <begin position="71"/>
        <end position="77"/>
    </location>
</feature>
<feature type="helix" evidence="15">
    <location>
        <begin position="79"/>
        <end position="83"/>
    </location>
</feature>
<feature type="helix" evidence="15">
    <location>
        <begin position="87"/>
        <end position="101"/>
    </location>
</feature>
<feature type="helix" evidence="15">
    <location>
        <begin position="103"/>
        <end position="111"/>
    </location>
</feature>
<feature type="strand" evidence="15">
    <location>
        <begin position="116"/>
        <end position="119"/>
    </location>
</feature>
<feature type="strand" evidence="15">
    <location>
        <begin position="121"/>
        <end position="125"/>
    </location>
</feature>
<feature type="helix" evidence="15">
    <location>
        <begin position="126"/>
        <end position="130"/>
    </location>
</feature>
<feature type="strand" evidence="15">
    <location>
        <begin position="131"/>
        <end position="134"/>
    </location>
</feature>
<feature type="strand" evidence="17">
    <location>
        <begin position="137"/>
        <end position="139"/>
    </location>
</feature>
<feature type="strand" evidence="14">
    <location>
        <begin position="142"/>
        <end position="144"/>
    </location>
</feature>
<feature type="strand" evidence="17">
    <location>
        <begin position="146"/>
        <end position="148"/>
    </location>
</feature>
<feature type="helix" evidence="15">
    <location>
        <begin position="153"/>
        <end position="166"/>
    </location>
</feature>
<feature type="helix" evidence="15">
    <location>
        <begin position="171"/>
        <end position="178"/>
    </location>
</feature>
<gene>
    <name evidence="1" type="primary">seqA</name>
    <name type="ordered locus">b0687</name>
    <name type="ordered locus">JW0674</name>
</gene>
<evidence type="ECO:0000255" key="1">
    <source>
        <dbReference type="HAMAP-Rule" id="MF_00908"/>
    </source>
</evidence>
<evidence type="ECO:0000269" key="2">
    <source>
    </source>
</evidence>
<evidence type="ECO:0000269" key="3">
    <source>
    </source>
</evidence>
<evidence type="ECO:0000269" key="4">
    <source>
    </source>
</evidence>
<evidence type="ECO:0000269" key="5">
    <source>
    </source>
</evidence>
<evidence type="ECO:0000269" key="6">
    <source>
    </source>
</evidence>
<evidence type="ECO:0000269" key="7">
    <source>
    </source>
</evidence>
<evidence type="ECO:0000269" key="8">
    <source>
    </source>
</evidence>
<evidence type="ECO:0000269" key="9">
    <source>
    </source>
</evidence>
<evidence type="ECO:0000269" key="10">
    <source>
    </source>
</evidence>
<evidence type="ECO:0000269" key="11">
    <source>
    </source>
</evidence>
<evidence type="ECO:0000269" key="12">
    <source>
    </source>
</evidence>
<evidence type="ECO:0000269" key="13">
    <source>
    </source>
</evidence>
<evidence type="ECO:0007829" key="14">
    <source>
        <dbReference type="PDB" id="1IU3"/>
    </source>
</evidence>
<evidence type="ECO:0007829" key="15">
    <source>
        <dbReference type="PDB" id="1J3E"/>
    </source>
</evidence>
<evidence type="ECO:0007829" key="16">
    <source>
        <dbReference type="PDB" id="1XRX"/>
    </source>
</evidence>
<evidence type="ECO:0007829" key="17">
    <source>
        <dbReference type="PDB" id="3FMT"/>
    </source>
</evidence>
<accession>P0AFY8</accession>
<accession>P36658</accession>
<protein>
    <recommendedName>
        <fullName evidence="1">Negative modulator of initiation of replication</fullName>
    </recommendedName>
</protein>